<organism>
    <name type="scientific">Saccharophagus degradans (strain 2-40 / ATCC 43961 / DSM 17024)</name>
    <dbReference type="NCBI Taxonomy" id="203122"/>
    <lineage>
        <taxon>Bacteria</taxon>
        <taxon>Pseudomonadati</taxon>
        <taxon>Pseudomonadota</taxon>
        <taxon>Gammaproteobacteria</taxon>
        <taxon>Cellvibrionales</taxon>
        <taxon>Cellvibrionaceae</taxon>
        <taxon>Saccharophagus</taxon>
    </lineage>
</organism>
<protein>
    <recommendedName>
        <fullName evidence="1">Putative pterin-4-alpha-carbinolamine dehydratase</fullName>
        <shortName evidence="1">PHS</shortName>
        <ecNumber evidence="1">4.2.1.96</ecNumber>
    </recommendedName>
    <alternativeName>
        <fullName evidence="1">4-alpha-hydroxy-tetrahydropterin dehydratase</fullName>
    </alternativeName>
    <alternativeName>
        <fullName evidence="1">Pterin carbinolamine dehydratase</fullName>
        <shortName evidence="1">PCD</shortName>
    </alternativeName>
</protein>
<accession>Q21MC6</accession>
<gene>
    <name type="ordered locus">Sde_0891</name>
</gene>
<reference key="1">
    <citation type="journal article" date="2008" name="PLoS Genet.">
        <title>Complete genome sequence of the complex carbohydrate-degrading marine bacterium, Saccharophagus degradans strain 2-40 T.</title>
        <authorList>
            <person name="Weiner R.M."/>
            <person name="Taylor L.E. II"/>
            <person name="Henrissat B."/>
            <person name="Hauser L."/>
            <person name="Land M."/>
            <person name="Coutinho P.M."/>
            <person name="Rancurel C."/>
            <person name="Saunders E.H."/>
            <person name="Longmire A.G."/>
            <person name="Zhang H."/>
            <person name="Bayer E.A."/>
            <person name="Gilbert H.J."/>
            <person name="Larimer F."/>
            <person name="Zhulin I.B."/>
            <person name="Ekborg N.A."/>
            <person name="Lamed R."/>
            <person name="Richardson P.M."/>
            <person name="Borovok I."/>
            <person name="Hutcheson S."/>
        </authorList>
    </citation>
    <scope>NUCLEOTIDE SEQUENCE [LARGE SCALE GENOMIC DNA]</scope>
    <source>
        <strain>2-40 / ATCC 43961 / DSM 17024</strain>
    </source>
</reference>
<feature type="chain" id="PRO_1000050451" description="Putative pterin-4-alpha-carbinolamine dehydratase">
    <location>
        <begin position="1"/>
        <end position="113"/>
    </location>
</feature>
<sequence length="113" mass="13098">MTDLYQQTCEVCRADAPRVPVDEAEVMLEEIPLWRIQQQEGVKQLARNFKFKNFIEALAFTNTVANLAEEEGHHPKLVLEWGSVEVVWWTHKIKGLHKNDFVMAAKTDKLYEG</sequence>
<keyword id="KW-0456">Lyase</keyword>
<keyword id="KW-1185">Reference proteome</keyword>
<proteinExistence type="inferred from homology"/>
<name>PHS_SACD2</name>
<dbReference type="EC" id="4.2.1.96" evidence="1"/>
<dbReference type="EMBL" id="CP000282">
    <property type="protein sequence ID" value="ABD80153.1"/>
    <property type="molecule type" value="Genomic_DNA"/>
</dbReference>
<dbReference type="RefSeq" id="WP_011467374.1">
    <property type="nucleotide sequence ID" value="NC_007912.1"/>
</dbReference>
<dbReference type="SMR" id="Q21MC6"/>
<dbReference type="STRING" id="203122.Sde_0891"/>
<dbReference type="GeneID" id="98612573"/>
<dbReference type="KEGG" id="sde:Sde_0891"/>
<dbReference type="eggNOG" id="COG2154">
    <property type="taxonomic scope" value="Bacteria"/>
</dbReference>
<dbReference type="HOGENOM" id="CLU_081974_2_2_6"/>
<dbReference type="OrthoDB" id="5294615at2"/>
<dbReference type="Proteomes" id="UP000001947">
    <property type="component" value="Chromosome"/>
</dbReference>
<dbReference type="GO" id="GO:0008124">
    <property type="term" value="F:4-alpha-hydroxytetrahydrobiopterin dehydratase activity"/>
    <property type="evidence" value="ECO:0007669"/>
    <property type="project" value="UniProtKB-UniRule"/>
</dbReference>
<dbReference type="GO" id="GO:0006729">
    <property type="term" value="P:tetrahydrobiopterin biosynthetic process"/>
    <property type="evidence" value="ECO:0007669"/>
    <property type="project" value="InterPro"/>
</dbReference>
<dbReference type="CDD" id="cd00913">
    <property type="entry name" value="PCD_DCoH_subfamily_a"/>
    <property type="match status" value="1"/>
</dbReference>
<dbReference type="Gene3D" id="3.30.1360.20">
    <property type="entry name" value="Transcriptional coactivator/pterin dehydratase"/>
    <property type="match status" value="1"/>
</dbReference>
<dbReference type="HAMAP" id="MF_00434">
    <property type="entry name" value="Pterin_4_alpha"/>
    <property type="match status" value="1"/>
</dbReference>
<dbReference type="InterPro" id="IPR036428">
    <property type="entry name" value="PCD_sf"/>
</dbReference>
<dbReference type="InterPro" id="IPR050376">
    <property type="entry name" value="Pterin-4-alpha-carb_dehyd"/>
</dbReference>
<dbReference type="InterPro" id="IPR001533">
    <property type="entry name" value="Pterin_deHydtase"/>
</dbReference>
<dbReference type="NCBIfam" id="NF002016">
    <property type="entry name" value="PRK00823.1-1"/>
    <property type="match status" value="1"/>
</dbReference>
<dbReference type="PANTHER" id="PTHR42805">
    <property type="entry name" value="PTERIN-4-ALPHA-CARBINOLAMINE DEHYDRATASE-RELATED"/>
    <property type="match status" value="1"/>
</dbReference>
<dbReference type="PANTHER" id="PTHR42805:SF1">
    <property type="entry name" value="PTERIN-4-ALPHA-CARBINOLAMINE DEHYDRATASE-RELATED"/>
    <property type="match status" value="1"/>
</dbReference>
<dbReference type="Pfam" id="PF01329">
    <property type="entry name" value="Pterin_4a"/>
    <property type="match status" value="1"/>
</dbReference>
<dbReference type="SUPFAM" id="SSF55248">
    <property type="entry name" value="PCD-like"/>
    <property type="match status" value="1"/>
</dbReference>
<evidence type="ECO:0000255" key="1">
    <source>
        <dbReference type="HAMAP-Rule" id="MF_00434"/>
    </source>
</evidence>
<comment type="catalytic activity">
    <reaction evidence="1">
        <text>(4aS,6R)-4a-hydroxy-L-erythro-5,6,7,8-tetrahydrobiopterin = (6R)-L-erythro-6,7-dihydrobiopterin + H2O</text>
        <dbReference type="Rhea" id="RHEA:11920"/>
        <dbReference type="ChEBI" id="CHEBI:15377"/>
        <dbReference type="ChEBI" id="CHEBI:15642"/>
        <dbReference type="ChEBI" id="CHEBI:43120"/>
        <dbReference type="EC" id="4.2.1.96"/>
    </reaction>
</comment>
<comment type="similarity">
    <text evidence="1">Belongs to the pterin-4-alpha-carbinolamine dehydratase family.</text>
</comment>